<sequence>MSLWFLVFLSVLQGVTELFPVSSLGHTLLVPALFGMHIDKHAPQLLPFLVALHLGTAFALLWYFRERWIALIAGFFASLNGRKNDEGHLMWALIIGTIPAGLVGLLLEKRIERVFHDLRIVAVALIVNGILLWLGDRIQRARAHRPPEKLTFKQAFFVGLAQVGALIPGFSRSGLTMIAGNAAGLTAEKAAEFSFLLGTPIIFAAGLLELPKLFHAPDQLADALLGGVLTAIAAYLSVRFLMRYFEGRGRLASFGLYCALAGLFCLGWFMFHAQPV</sequence>
<protein>
    <recommendedName>
        <fullName evidence="1">Undecaprenyl-diphosphatase 2</fullName>
        <ecNumber evidence="1">3.6.1.27</ecNumber>
    </recommendedName>
    <alternativeName>
        <fullName evidence="1">Bacitracin resistance protein 2</fullName>
    </alternativeName>
    <alternativeName>
        <fullName evidence="1">Undecaprenyl pyrophosphate phosphatase 2</fullName>
    </alternativeName>
</protein>
<accession>Q2SUY6</accession>
<evidence type="ECO:0000255" key="1">
    <source>
        <dbReference type="HAMAP-Rule" id="MF_01006"/>
    </source>
</evidence>
<reference key="1">
    <citation type="journal article" date="2005" name="BMC Genomics">
        <title>Bacterial genome adaptation to niches: divergence of the potential virulence genes in three Burkholderia species of different survival strategies.</title>
        <authorList>
            <person name="Kim H.S."/>
            <person name="Schell M.A."/>
            <person name="Yu Y."/>
            <person name="Ulrich R.L."/>
            <person name="Sarria S.H."/>
            <person name="Nierman W.C."/>
            <person name="DeShazer D."/>
        </authorList>
    </citation>
    <scope>NUCLEOTIDE SEQUENCE [LARGE SCALE GENOMIC DNA]</scope>
    <source>
        <strain>ATCC 700388 / DSM 13276 / CCUG 48851 / CIP 106301 / E264</strain>
    </source>
</reference>
<proteinExistence type="inferred from homology"/>
<gene>
    <name evidence="1" type="primary">uppP2</name>
    <name type="ordered locus">BTH_I2750</name>
</gene>
<name>UPPP2_BURTA</name>
<comment type="function">
    <text evidence="1">Catalyzes the dephosphorylation of undecaprenyl diphosphate (UPP). Confers resistance to bacitracin.</text>
</comment>
<comment type="catalytic activity">
    <reaction evidence="1">
        <text>di-trans,octa-cis-undecaprenyl diphosphate + H2O = di-trans,octa-cis-undecaprenyl phosphate + phosphate + H(+)</text>
        <dbReference type="Rhea" id="RHEA:28094"/>
        <dbReference type="ChEBI" id="CHEBI:15377"/>
        <dbReference type="ChEBI" id="CHEBI:15378"/>
        <dbReference type="ChEBI" id="CHEBI:43474"/>
        <dbReference type="ChEBI" id="CHEBI:58405"/>
        <dbReference type="ChEBI" id="CHEBI:60392"/>
        <dbReference type="EC" id="3.6.1.27"/>
    </reaction>
</comment>
<comment type="subcellular location">
    <subcellularLocation>
        <location evidence="1">Cell inner membrane</location>
        <topology evidence="1">Multi-pass membrane protein</topology>
    </subcellularLocation>
</comment>
<comment type="miscellaneous">
    <text>Bacitracin is thought to be involved in the inhibition of peptidoglycan synthesis by sequestering undecaprenyl diphosphate, thereby reducing the pool of lipid carrier available.</text>
</comment>
<comment type="similarity">
    <text evidence="1">Belongs to the UppP family.</text>
</comment>
<dbReference type="EC" id="3.6.1.27" evidence="1"/>
<dbReference type="EMBL" id="CP000086">
    <property type="protein sequence ID" value="ABC36529.1"/>
    <property type="molecule type" value="Genomic_DNA"/>
</dbReference>
<dbReference type="RefSeq" id="WP_009905986.1">
    <property type="nucleotide sequence ID" value="NZ_CP008785.1"/>
</dbReference>
<dbReference type="SMR" id="Q2SUY6"/>
<dbReference type="GeneID" id="45122448"/>
<dbReference type="KEGG" id="bte:BTH_I2750"/>
<dbReference type="HOGENOM" id="CLU_060296_1_1_4"/>
<dbReference type="Proteomes" id="UP000001930">
    <property type="component" value="Chromosome I"/>
</dbReference>
<dbReference type="GO" id="GO:0005886">
    <property type="term" value="C:plasma membrane"/>
    <property type="evidence" value="ECO:0007669"/>
    <property type="project" value="UniProtKB-SubCell"/>
</dbReference>
<dbReference type="GO" id="GO:0050380">
    <property type="term" value="F:undecaprenyl-diphosphatase activity"/>
    <property type="evidence" value="ECO:0007669"/>
    <property type="project" value="UniProtKB-UniRule"/>
</dbReference>
<dbReference type="GO" id="GO:0071555">
    <property type="term" value="P:cell wall organization"/>
    <property type="evidence" value="ECO:0007669"/>
    <property type="project" value="UniProtKB-KW"/>
</dbReference>
<dbReference type="GO" id="GO:0009252">
    <property type="term" value="P:peptidoglycan biosynthetic process"/>
    <property type="evidence" value="ECO:0007669"/>
    <property type="project" value="UniProtKB-KW"/>
</dbReference>
<dbReference type="GO" id="GO:0008360">
    <property type="term" value="P:regulation of cell shape"/>
    <property type="evidence" value="ECO:0007669"/>
    <property type="project" value="UniProtKB-KW"/>
</dbReference>
<dbReference type="GO" id="GO:0046677">
    <property type="term" value="P:response to antibiotic"/>
    <property type="evidence" value="ECO:0007669"/>
    <property type="project" value="UniProtKB-UniRule"/>
</dbReference>
<dbReference type="HAMAP" id="MF_01006">
    <property type="entry name" value="Undec_diphosphatase"/>
    <property type="match status" value="1"/>
</dbReference>
<dbReference type="InterPro" id="IPR003824">
    <property type="entry name" value="UppP"/>
</dbReference>
<dbReference type="PANTHER" id="PTHR30622">
    <property type="entry name" value="UNDECAPRENYL-DIPHOSPHATASE"/>
    <property type="match status" value="1"/>
</dbReference>
<dbReference type="PANTHER" id="PTHR30622:SF4">
    <property type="entry name" value="UNDECAPRENYL-DIPHOSPHATASE"/>
    <property type="match status" value="1"/>
</dbReference>
<dbReference type="Pfam" id="PF02673">
    <property type="entry name" value="BacA"/>
    <property type="match status" value="1"/>
</dbReference>
<organism>
    <name type="scientific">Burkholderia thailandensis (strain ATCC 700388 / DSM 13276 / CCUG 48851 / CIP 106301 / E264)</name>
    <dbReference type="NCBI Taxonomy" id="271848"/>
    <lineage>
        <taxon>Bacteria</taxon>
        <taxon>Pseudomonadati</taxon>
        <taxon>Pseudomonadota</taxon>
        <taxon>Betaproteobacteria</taxon>
        <taxon>Burkholderiales</taxon>
        <taxon>Burkholderiaceae</taxon>
        <taxon>Burkholderia</taxon>
        <taxon>pseudomallei group</taxon>
    </lineage>
</organism>
<feature type="chain" id="PRO_0000250229" description="Undecaprenyl-diphosphatase 2">
    <location>
        <begin position="1"/>
        <end position="276"/>
    </location>
</feature>
<feature type="transmembrane region" description="Helical" evidence="1">
    <location>
        <begin position="1"/>
        <end position="21"/>
    </location>
</feature>
<feature type="transmembrane region" description="Helical" evidence="1">
    <location>
        <begin position="44"/>
        <end position="64"/>
    </location>
</feature>
<feature type="transmembrane region" description="Helical" evidence="1">
    <location>
        <begin position="87"/>
        <end position="107"/>
    </location>
</feature>
<feature type="transmembrane region" description="Helical" evidence="1">
    <location>
        <begin position="114"/>
        <end position="134"/>
    </location>
</feature>
<feature type="transmembrane region" description="Helical" evidence="1">
    <location>
        <begin position="150"/>
        <end position="170"/>
    </location>
</feature>
<feature type="transmembrane region" description="Helical" evidence="1">
    <location>
        <begin position="190"/>
        <end position="210"/>
    </location>
</feature>
<feature type="transmembrane region" description="Helical" evidence="1">
    <location>
        <begin position="222"/>
        <end position="242"/>
    </location>
</feature>
<feature type="transmembrane region" description="Helical" evidence="1">
    <location>
        <begin position="251"/>
        <end position="271"/>
    </location>
</feature>
<keyword id="KW-0046">Antibiotic resistance</keyword>
<keyword id="KW-0997">Cell inner membrane</keyword>
<keyword id="KW-1003">Cell membrane</keyword>
<keyword id="KW-0133">Cell shape</keyword>
<keyword id="KW-0961">Cell wall biogenesis/degradation</keyword>
<keyword id="KW-0378">Hydrolase</keyword>
<keyword id="KW-0472">Membrane</keyword>
<keyword id="KW-0573">Peptidoglycan synthesis</keyword>
<keyword id="KW-0812">Transmembrane</keyword>
<keyword id="KW-1133">Transmembrane helix</keyword>